<comment type="function">
    <text evidence="8 10 11 13">Lipid transporter involved in lipid countertransport between the Golgi complex and membranes of the endoplasmic reticulum: specifically exchanges sterol with phosphatidylinositol 4-phosphate (PI4P), delivering sterol to the Golgi in exchange for PI4P, which is degraded by the SAC1/SACM1L phosphatase in the endoplasmic reticulum (PubMed:24209621). Binds cholesterol and a range of oxysterols including 25-hydroxycholesterol (PubMed:15746430, PubMed:17428193). Cholesterol binding promotes the formation of a complex with PP2A and a tyrosine phosphatase which dephosphorylates ERK1/2, whereas 25-hydroxycholesterol causes its disassembly (PubMed:15746430). Regulates cholesterol efflux by decreasing ABCA1 stability (PubMed:18450749).</text>
</comment>
<comment type="subunit">
    <text evidence="3 12 13">Homodimer or homotrimer. Interacts (via FFAT motif) with VAPA (PubMed:20178991, PubMed:24209621). Interacts (via C-terminus) with RELCH (via the third HEAT repeat) (By similarity). Found in a complex composed of RELCH, OSBP1 and RAB11A (By similarity).</text>
</comment>
<comment type="interaction">
    <interactant intactId="EBI-2681902">
        <id>P22059</id>
    </interactant>
    <interactant intactId="EBI-2848814">
        <id>Q92685</id>
        <label>ALG3</label>
    </interactant>
    <organismsDiffer>false</organismsDiffer>
    <experiments>2</experiments>
</comment>
<comment type="interaction">
    <interactant intactId="EBI-2681902">
        <id>P22059</id>
    </interactant>
    <interactant intactId="EBI-744771">
        <id>O75344</id>
        <label>FKBP6</label>
    </interactant>
    <organismsDiffer>false</organismsDiffer>
    <experiments>5</experiments>
</comment>
<comment type="interaction">
    <interactant intactId="EBI-2681902">
        <id>P22059</id>
    </interactant>
    <interactant intactId="EBI-1059156">
        <id>Q9P0L0</id>
        <label>VAPA</label>
    </interactant>
    <organismsDiffer>false</organismsDiffer>
    <experiments>9</experiments>
</comment>
<comment type="interaction">
    <interactant intactId="EBI-2681902">
        <id>P22059</id>
    </interactant>
    <interactant intactId="EBI-10726249">
        <id>A0A0H3NDL6</id>
        <label>sseL</label>
    </interactant>
    <organismsDiffer>true</organismsDiffer>
    <experiments>3</experiments>
</comment>
<comment type="interaction">
    <interactant intactId="EBI-2681902">
        <id>P22059</id>
    </interactant>
    <interactant intactId="EBI-10690213">
        <id>Q8ZNG2</id>
        <label>sseL</label>
    </interactant>
    <organismsDiffer>true</organismsDiffer>
    <experiments>4</experiments>
</comment>
<comment type="subcellular location">
    <subcellularLocation>
        <location evidence="13 14">Cytoplasm</location>
        <location evidence="13 14">Cytosol</location>
    </subcellularLocation>
    <subcellularLocation>
        <location evidence="13">Cytoplasm</location>
        <location evidence="13">Perinuclear region</location>
    </subcellularLocation>
    <subcellularLocation>
        <location>Golgi apparatus membrane</location>
        <topology evidence="13">Peripheral membrane protein</topology>
    </subcellularLocation>
    <subcellularLocation>
        <location>Endoplasmic reticulum membrane</location>
        <topology evidence="13">Peripheral membrane protein</topology>
    </subcellularLocation>
    <subcellularLocation>
        <location evidence="14">Golgi apparatus</location>
        <location evidence="14">trans-Golgi network</location>
    </subcellularLocation>
    <text evidence="13">Predominantly cytosolic.</text>
</comment>
<comment type="tissue specificity">
    <text evidence="7">Widely expressed.</text>
</comment>
<comment type="domain">
    <text evidence="13">The FFAT motif is required for interaction with VATA and proper localization of the protein.</text>
</comment>
<comment type="domain">
    <text evidence="1">The PH and the Ala/Gly-rich domains control cholesterol binding without affecting 25-hydroxycholesterol binding.</text>
</comment>
<comment type="domain">
    <text evidence="1">The second coiled-coil domain is required for interaction with the tyrosine phosphatase.</text>
</comment>
<comment type="similarity">
    <text evidence="15">Belongs to the OSBP family.</text>
</comment>
<comment type="sequence caution" evidence="15">
    <conflict type="miscellaneous discrepancy">
        <sequence resource="EMBL-CDS" id="AAH63121"/>
    </conflict>
    <text>Aberrant splicing.</text>
</comment>
<proteinExistence type="evidence at protein level"/>
<protein>
    <recommendedName>
        <fullName evidence="15">Oxysterol-binding protein 1</fullName>
    </recommendedName>
</protein>
<sequence>MAATELRGVVGPGPAAIAALGGGGAGPPVVGGGGGRGDAGPGSGAASGTVVAAAAGGPGPGAGGVAAAGPAPAPPTGGSGGSGAGGSGSAREGWLFKWTNYIKGYQRRWFVLSNGLLSYYRSKAEMRHTCRGTINLATANITVEDSCNFIISNGGAQTYHLKASSEVERQRWVTALELAKAKAVKMLAESDESGDEESVSQTDKTELQNTLRTLSSKVEDLSTCNDLIAKHGTALQRSLSELESLKLPAESNEKIKQVNERATLFRITSNAMINACRDFLMLAQTHSKKWQKSLQYERDQRIRLEETLEQLAKQHNHLERAFRGATVLPANTPGNVGSGKDQCCSGKGDMSDEDDENEFFDAPEIITMPENLGHKRTGSNISGASSDISLDEQYKHQLEETKKEKRTRIPYKPNYSLNLWSIMKNCIGKELSKIPMPVNFNEPLSMLQRLTEDLEYHELLDRAAKCENSLEQLCYVAAFTVSSYSTTVFRTSKPFNPLLGETFELDRLEENGYRSLCEQVSHHPPAAAHHAESKNGWTLRQEIKITSKFRGKYLSIMPLGTIHCIFHATGHHYTWKKVTTTVHNIIVGKLWIDQSGEIDIVNHKTGDKCNLKFVPYSYFSRDVARKVTGEVTDPSGKVHFALLGTWDEKMECFKVQPVIGENGGDARQRGHEAEESRVMLWKRNPLPKNAENMYYFSELALTLNAWESGTAPTDSRLRPDQRLMENGRWDEANAEKQRLEEKQRLSRKKREAEAMKATEDGTPYDPYKALWFERKKDPVTKELTHIYRGEYWECKEKQDWSSCPDIF</sequence>
<keyword id="KW-0002">3D-structure</keyword>
<keyword id="KW-0007">Acetylation</keyword>
<keyword id="KW-0175">Coiled coil</keyword>
<keyword id="KW-0963">Cytoplasm</keyword>
<keyword id="KW-0256">Endoplasmic reticulum</keyword>
<keyword id="KW-0333">Golgi apparatus</keyword>
<keyword id="KW-0445">Lipid transport</keyword>
<keyword id="KW-0446">Lipid-binding</keyword>
<keyword id="KW-0472">Membrane</keyword>
<keyword id="KW-0597">Phosphoprotein</keyword>
<keyword id="KW-1267">Proteomics identification</keyword>
<keyword id="KW-1185">Reference proteome</keyword>
<keyword id="KW-0813">Transport</keyword>
<organism>
    <name type="scientific">Homo sapiens</name>
    <name type="common">Human</name>
    <dbReference type="NCBI Taxonomy" id="9606"/>
    <lineage>
        <taxon>Eukaryota</taxon>
        <taxon>Metazoa</taxon>
        <taxon>Chordata</taxon>
        <taxon>Craniata</taxon>
        <taxon>Vertebrata</taxon>
        <taxon>Euteleostomi</taxon>
        <taxon>Mammalia</taxon>
        <taxon>Eutheria</taxon>
        <taxon>Euarchontoglires</taxon>
        <taxon>Primates</taxon>
        <taxon>Haplorrhini</taxon>
        <taxon>Catarrhini</taxon>
        <taxon>Hominidae</taxon>
        <taxon>Homo</taxon>
    </lineage>
</organism>
<reference key="1">
    <citation type="journal article" date="1990" name="Genomics">
        <title>cDNA cloning of human oxysterol-binding protein and localization of the gene to human chromosome 11 and mouse chromosome 19.</title>
        <authorList>
            <person name="Levanon D."/>
            <person name="Hsieh C.L."/>
            <person name="Francke U."/>
            <person name="Dawson P.A."/>
            <person name="Ridgway N.D."/>
            <person name="Brown M.S."/>
            <person name="Goldstein J.L."/>
        </authorList>
    </citation>
    <scope>NUCLEOTIDE SEQUENCE [MRNA]</scope>
</reference>
<reference key="2">
    <citation type="journal article" date="2001" name="J. Biol. Chem.">
        <title>Molecular and biochemical characterization of a novel oxysterol-binding protein (OSBP2) highly expressed in retina.</title>
        <authorList>
            <person name="Moreira E.F."/>
            <person name="Jaworski C."/>
            <person name="Li A."/>
            <person name="Rodriguez I.R."/>
        </authorList>
    </citation>
    <scope>NUCLEOTIDE SEQUENCE [GENOMIC DNA]</scope>
    <scope>TISSUE SPECIFICITY</scope>
</reference>
<reference key="3">
    <citation type="journal article" date="2004" name="Genome Res.">
        <title>The status, quality, and expansion of the NIH full-length cDNA project: the Mammalian Gene Collection (MGC).</title>
        <authorList>
            <consortium name="The MGC Project Team"/>
        </authorList>
    </citation>
    <scope>NUCLEOTIDE SEQUENCE [LARGE SCALE MRNA]</scope>
    <source>
        <tissue>Kidney</tissue>
        <tissue>Placenta</tissue>
    </source>
</reference>
<reference key="4">
    <citation type="journal article" date="2005" name="Science">
        <title>OSBP is a cholesterol-regulated scaffolding protein in control of ERK 1/2 activation.</title>
        <authorList>
            <person name="Wang P.-Y."/>
            <person name="Weng J."/>
            <person name="Anderson R.G.W."/>
        </authorList>
    </citation>
    <scope>FUNCTION</scope>
</reference>
<reference key="5">
    <citation type="journal article" date="2006" name="Cell">
        <title>Global, in vivo, and site-specific phosphorylation dynamics in signaling networks.</title>
        <authorList>
            <person name="Olsen J.V."/>
            <person name="Blagoev B."/>
            <person name="Gnad F."/>
            <person name="Macek B."/>
            <person name="Kumar C."/>
            <person name="Mortensen P."/>
            <person name="Mann M."/>
        </authorList>
    </citation>
    <scope>PHOSPHORYLATION [LARGE SCALE ANALYSIS] AT SER-190; SER-193; SER-351 AND SER-382</scope>
    <scope>IDENTIFICATION BY MASS SPECTROMETRY [LARGE SCALE ANALYSIS]</scope>
    <source>
        <tissue>Cervix carcinoma</tissue>
    </source>
</reference>
<reference key="6">
    <citation type="journal article" date="2007" name="Biochem. J.">
        <title>The mammalian oxysterol-binding protein-related proteins (ORPs) bind 25-hydroxycholesterol in an evolutionarily conserved pocket.</title>
        <authorList>
            <person name="Suchanek M."/>
            <person name="Hynynen R."/>
            <person name="Wohlfahrt G."/>
            <person name="Lehto M."/>
            <person name="Johansson M."/>
            <person name="Saarinen H."/>
            <person name="Radzikowska A."/>
            <person name="Thiele C."/>
            <person name="Olkkonen V.M."/>
        </authorList>
    </citation>
    <scope>FUNCTION</scope>
</reference>
<reference key="7">
    <citation type="journal article" date="2008" name="J. Biol. Chem.">
        <title>OSBP negatively regulates ABCA1 protein stability.</title>
        <authorList>
            <person name="Bowden K."/>
            <person name="Ridgway N.D."/>
        </authorList>
    </citation>
    <scope>FUNCTION</scope>
</reference>
<reference key="8">
    <citation type="journal article" date="2008" name="J. Proteome Res.">
        <title>Phosphoproteome of resting human platelets.</title>
        <authorList>
            <person name="Zahedi R.P."/>
            <person name="Lewandrowski U."/>
            <person name="Wiesner J."/>
            <person name="Wortelkamp S."/>
            <person name="Moebius J."/>
            <person name="Schuetz C."/>
            <person name="Walter U."/>
            <person name="Gambaryan S."/>
            <person name="Sickmann A."/>
        </authorList>
    </citation>
    <scope>PHOSPHORYLATION [LARGE SCALE ANALYSIS] AT SER-190; SER-193; SER-351; SER-382 AND SER-389</scope>
    <scope>IDENTIFICATION BY MASS SPECTROMETRY [LARGE SCALE ANALYSIS]</scope>
    <source>
        <tissue>Platelet</tissue>
    </source>
</reference>
<reference key="9">
    <citation type="journal article" date="2008" name="Proc. Natl. Acad. Sci. U.S.A.">
        <title>A quantitative atlas of mitotic phosphorylation.</title>
        <authorList>
            <person name="Dephoure N."/>
            <person name="Zhou C."/>
            <person name="Villen J."/>
            <person name="Beausoleil S.A."/>
            <person name="Bakalarski C.E."/>
            <person name="Elledge S.J."/>
            <person name="Gygi S.P."/>
        </authorList>
    </citation>
    <scope>PHOSPHORYLATION [LARGE SCALE ANALYSIS] AT SER-190; SER-193; SER-198; SER-351 AND SER-382</scope>
    <scope>IDENTIFICATION BY MASS SPECTROMETRY [LARGE SCALE ANALYSIS]</scope>
    <source>
        <tissue>Cervix carcinoma</tissue>
    </source>
</reference>
<reference key="10">
    <citation type="journal article" date="2008" name="Proteomics">
        <title>Large-scale phosphoproteome analysis of human liver tissue by enrichment and fractionation of phosphopeptides with strong anion exchange chromatography.</title>
        <authorList>
            <person name="Han G."/>
            <person name="Ye M."/>
            <person name="Zhou H."/>
            <person name="Jiang X."/>
            <person name="Feng S."/>
            <person name="Jiang X."/>
            <person name="Tian R."/>
            <person name="Wan D."/>
            <person name="Zou H."/>
            <person name="Gu J."/>
        </authorList>
    </citation>
    <scope>PHOSPHORYLATION [LARGE SCALE ANALYSIS] AT SER-190; SER-193 AND SER-351</scope>
    <scope>IDENTIFICATION BY MASS SPECTROMETRY [LARGE SCALE ANALYSIS]</scope>
    <source>
        <tissue>Liver</tissue>
    </source>
</reference>
<reference key="11">
    <citation type="journal article" date="2009" name="Anal. Chem.">
        <title>Lys-N and trypsin cover complementary parts of the phosphoproteome in a refined SCX-based approach.</title>
        <authorList>
            <person name="Gauci S."/>
            <person name="Helbig A.O."/>
            <person name="Slijper M."/>
            <person name="Krijgsveld J."/>
            <person name="Heck A.J."/>
            <person name="Mohammed S."/>
        </authorList>
    </citation>
    <scope>IDENTIFICATION BY MASS SPECTROMETRY [LARGE SCALE ANALYSIS]</scope>
</reference>
<reference key="12">
    <citation type="journal article" date="2009" name="Sci. Signal.">
        <title>Quantitative phosphoproteomic analysis of T cell receptor signaling reveals system-wide modulation of protein-protein interactions.</title>
        <authorList>
            <person name="Mayya V."/>
            <person name="Lundgren D.H."/>
            <person name="Hwang S.-I."/>
            <person name="Rezaul K."/>
            <person name="Wu L."/>
            <person name="Eng J.K."/>
            <person name="Rodionov V."/>
            <person name="Han D.K."/>
        </authorList>
    </citation>
    <scope>PHOSPHORYLATION [LARGE SCALE ANALYSIS] AT SER-190; SER-193; SER-351 AND SER-382</scope>
    <scope>IDENTIFICATION BY MASS SPECTROMETRY [LARGE SCALE ANALYSIS]</scope>
    <source>
        <tissue>Leukemic T-cell</tissue>
    </source>
</reference>
<reference key="13">
    <citation type="journal article" date="2010" name="Sci. Signal.">
        <title>Quantitative phosphoproteomics reveals widespread full phosphorylation site occupancy during mitosis.</title>
        <authorList>
            <person name="Olsen J.V."/>
            <person name="Vermeulen M."/>
            <person name="Santamaria A."/>
            <person name="Kumar C."/>
            <person name="Miller M.L."/>
            <person name="Jensen L.J."/>
            <person name="Gnad F."/>
            <person name="Cox J."/>
            <person name="Jensen T.S."/>
            <person name="Nigg E.A."/>
            <person name="Brunak S."/>
            <person name="Mann M."/>
        </authorList>
    </citation>
    <scope>PHOSPHORYLATION [LARGE SCALE ANALYSIS] AT SER-190; SER-193 AND SER-351</scope>
    <scope>IDENTIFICATION BY MASS SPECTROMETRY [LARGE SCALE ANALYSIS]</scope>
    <source>
        <tissue>Cervix carcinoma</tissue>
    </source>
</reference>
<reference key="14">
    <citation type="journal article" date="2011" name="BMC Syst. Biol.">
        <title>Initial characterization of the human central proteome.</title>
        <authorList>
            <person name="Burkard T.R."/>
            <person name="Planyavsky M."/>
            <person name="Kaupe I."/>
            <person name="Breitwieser F.P."/>
            <person name="Buerckstuemmer T."/>
            <person name="Bennett K.L."/>
            <person name="Superti-Furga G."/>
            <person name="Colinge J."/>
        </authorList>
    </citation>
    <scope>IDENTIFICATION BY MASS SPECTROMETRY [LARGE SCALE ANALYSIS]</scope>
</reference>
<reference key="15">
    <citation type="journal article" date="2011" name="Sci. Signal.">
        <title>System-wide temporal characterization of the proteome and phosphoproteome of human embryonic stem cell differentiation.</title>
        <authorList>
            <person name="Rigbolt K.T."/>
            <person name="Prokhorova T.A."/>
            <person name="Akimov V."/>
            <person name="Henningsen J."/>
            <person name="Johansen P.T."/>
            <person name="Kratchmarova I."/>
            <person name="Kassem M."/>
            <person name="Mann M."/>
            <person name="Olsen J.V."/>
            <person name="Blagoev B."/>
        </authorList>
    </citation>
    <scope>PHOSPHORYLATION [LARGE SCALE ANALYSIS] AT SER-193 AND SER-351</scope>
    <scope>IDENTIFICATION BY MASS SPECTROMETRY [LARGE SCALE ANALYSIS]</scope>
</reference>
<reference key="16">
    <citation type="journal article" date="2013" name="Cell">
        <title>A four-step cycle driven by PI(4)P hydrolysis directs sterol/PI(4)P exchange by the ER-Golgi tether OSBP.</title>
        <authorList>
            <person name="Mesmin B."/>
            <person name="Bigay J."/>
            <person name="Moser von Filseck J."/>
            <person name="Lacas-Gervais S."/>
            <person name="Drin G."/>
            <person name="Antonny B."/>
        </authorList>
    </citation>
    <scope>FUNCTION</scope>
    <scope>SUBCELLULAR LOCATION</scope>
    <scope>DOMAIN</scope>
    <scope>FFAT MOTIF</scope>
    <scope>INTERACTION WITH VAPA</scope>
    <scope>MUTAGENESIS OF ARG-108 AND 359-PHE-PHE-360</scope>
</reference>
<reference key="17">
    <citation type="journal article" date="2013" name="J. Proteome Res.">
        <title>Toward a comprehensive characterization of a human cancer cell phosphoproteome.</title>
        <authorList>
            <person name="Zhou H."/>
            <person name="Di Palma S."/>
            <person name="Preisinger C."/>
            <person name="Peng M."/>
            <person name="Polat A.N."/>
            <person name="Heck A.J."/>
            <person name="Mohammed S."/>
        </authorList>
    </citation>
    <scope>PHOSPHORYLATION [LARGE SCALE ANALYSIS] AT SER-190; SER-193; SER-238; SER-240; SER-338; SER-351; THR-377; SER-379; SER-382; SER-385; SER-386 AND SER-389</scope>
    <scope>IDENTIFICATION BY MASS SPECTROMETRY [LARGE SCALE ANALYSIS]</scope>
    <source>
        <tissue>Cervix carcinoma</tissue>
        <tissue>Erythroleukemia</tissue>
    </source>
</reference>
<reference key="18">
    <citation type="journal article" date="2014" name="J. Proteomics">
        <title>An enzyme assisted RP-RPLC approach for in-depth analysis of human liver phosphoproteome.</title>
        <authorList>
            <person name="Bian Y."/>
            <person name="Song C."/>
            <person name="Cheng K."/>
            <person name="Dong M."/>
            <person name="Wang F."/>
            <person name="Huang J."/>
            <person name="Sun D."/>
            <person name="Wang L."/>
            <person name="Ye M."/>
            <person name="Zou H."/>
        </authorList>
    </citation>
    <scope>PHOSPHORYLATION [LARGE SCALE ANALYSIS] AT SER-190; SER-193; SER-351; THR-377; SER-382; SER-385 AND SER-386</scope>
    <scope>IDENTIFICATION BY MASS SPECTROMETRY [LARGE SCALE ANALYSIS]</scope>
    <source>
        <tissue>Liver</tissue>
    </source>
</reference>
<reference key="19">
    <citation type="journal article" date="2015" name="Proteomics">
        <title>N-terminome analysis of the human mitochondrial proteome.</title>
        <authorList>
            <person name="Vaca Jacome A.S."/>
            <person name="Rabilloud T."/>
            <person name="Schaeffer-Reiss C."/>
            <person name="Rompais M."/>
            <person name="Ayoub D."/>
            <person name="Lane L."/>
            <person name="Bairoch A."/>
            <person name="Van Dorsselaer A."/>
            <person name="Carapito C."/>
        </authorList>
    </citation>
    <scope>ACETYLATION [LARGE SCALE ANALYSIS] AT ALA-2</scope>
    <scope>CLEAVAGE OF INITIATOR METHIONINE [LARGE SCALE ANALYSIS]</scope>
    <scope>IDENTIFICATION BY MASS SPECTROMETRY [LARGE SCALE ANALYSIS]</scope>
</reference>
<reference key="20">
    <citation type="journal article" date="2010" name="J. Biol. Chem.">
        <title>Electrostatic interaction between oxysterol-binding protein and VAMP-associated protein A revealed by NMR and mutagenesis studies.</title>
        <authorList>
            <person name="Furuita K."/>
            <person name="Jee J."/>
            <person name="Fukada H."/>
            <person name="Mishima M."/>
            <person name="Kojima C."/>
        </authorList>
    </citation>
    <scope>STRUCTURE BY NMR OF 346-379</scope>
    <scope>INTERACTION WITH VAPA</scope>
</reference>
<reference key="21">
    <citation type="journal article" date="2006" name="Science">
        <title>The consensus coding sequences of human breast and colorectal cancers.</title>
        <authorList>
            <person name="Sjoeblom T."/>
            <person name="Jones S."/>
            <person name="Wood L.D."/>
            <person name="Parsons D.W."/>
            <person name="Lin J."/>
            <person name="Barber T.D."/>
            <person name="Mandelker D."/>
            <person name="Leary R.J."/>
            <person name="Ptak J."/>
            <person name="Silliman N."/>
            <person name="Szabo S."/>
            <person name="Buckhaults P."/>
            <person name="Farrell C."/>
            <person name="Meeh P."/>
            <person name="Markowitz S.D."/>
            <person name="Willis J."/>
            <person name="Dawson D."/>
            <person name="Willson J.K.V."/>
            <person name="Gazdar A.F."/>
            <person name="Hartigan J."/>
            <person name="Wu L."/>
            <person name="Liu C."/>
            <person name="Parmigiani G."/>
            <person name="Park B.H."/>
            <person name="Bachman K.E."/>
            <person name="Papadopoulos N."/>
            <person name="Vogelstein B."/>
            <person name="Kinzler K.W."/>
            <person name="Velculescu V.E."/>
        </authorList>
    </citation>
    <scope>VARIANT [LARGE SCALE ANALYSIS] ALA-278</scope>
</reference>
<reference key="22">
    <citation type="journal article" date="2018" name="J. Cell Biol.">
        <title>The Rab11-binding protein RELCH/KIAA1468 controls intracellular cholesterol distribution.</title>
        <authorList>
            <person name="Sobajima T."/>
            <person name="Yoshimura S.I."/>
            <person name="Maeda T."/>
            <person name="Miyata H."/>
            <person name="Miyoshi E."/>
            <person name="Harada A."/>
        </authorList>
    </citation>
    <scope>SUBCELLULAR LOCATION</scope>
</reference>
<accession>P22059</accession>
<accession>Q6P524</accession>
<gene>
    <name evidence="16" type="primary">OSBP</name>
    <name type="synonym">OSBP1</name>
</gene>
<feature type="initiator methionine" description="Removed" evidence="26">
    <location>
        <position position="1"/>
    </location>
</feature>
<feature type="chain" id="PRO_0000100364" description="Oxysterol-binding protein 1">
    <location>
        <begin position="2"/>
        <end position="807"/>
    </location>
</feature>
<feature type="domain" description="PH" evidence="5">
    <location>
        <begin position="88"/>
        <end position="181"/>
    </location>
</feature>
<feature type="region of interest" description="Disordered" evidence="6">
    <location>
        <begin position="61"/>
        <end position="86"/>
    </location>
</feature>
<feature type="region of interest" description="Disordered" evidence="6">
    <location>
        <begin position="329"/>
        <end position="353"/>
    </location>
</feature>
<feature type="region of interest" description="Disordered" evidence="6">
    <location>
        <begin position="710"/>
        <end position="759"/>
    </location>
</feature>
<feature type="coiled-coil region" evidence="4">
    <location>
        <begin position="291"/>
        <end position="326"/>
    </location>
</feature>
<feature type="coiled-coil region" evidence="4">
    <location>
        <begin position="730"/>
        <end position="760"/>
    </location>
</feature>
<feature type="short sequence motif" description="FFAT" evidence="13">
    <location>
        <begin position="358"/>
        <end position="364"/>
    </location>
</feature>
<feature type="compositionally biased region" description="Gly residues" evidence="6">
    <location>
        <begin position="77"/>
        <end position="86"/>
    </location>
</feature>
<feature type="compositionally biased region" description="Basic and acidic residues" evidence="6">
    <location>
        <begin position="715"/>
        <end position="759"/>
    </location>
</feature>
<feature type="binding site" evidence="2">
    <location>
        <begin position="117"/>
        <end position="122"/>
    </location>
    <ligand>
        <name>a 1,2-diacyl-sn-glycero-3-phospho-(1D-myo-inositol 4-phosphate)</name>
        <dbReference type="ChEBI" id="CHEBI:58178"/>
    </ligand>
</feature>
<feature type="binding site" evidence="2">
    <location>
        <position position="314"/>
    </location>
    <ligand>
        <name>20-hydroxycholesterol</name>
        <dbReference type="ChEBI" id="CHEBI:1296"/>
    </ligand>
</feature>
<feature type="binding site" evidence="2">
    <location>
        <position position="314"/>
    </location>
    <ligand>
        <name>25-hydroxycholesterol</name>
        <dbReference type="ChEBI" id="CHEBI:42977"/>
    </ligand>
</feature>
<feature type="binding site" evidence="2">
    <location>
        <position position="314"/>
    </location>
    <ligand>
        <name>7beta-hydroxycholesterol</name>
        <dbReference type="ChEBI" id="CHEBI:42989"/>
    </ligand>
</feature>
<feature type="binding site" evidence="2">
    <location>
        <position position="314"/>
    </location>
    <ligand>
        <name>cholesterol</name>
        <dbReference type="ChEBI" id="CHEBI:16113"/>
    </ligand>
</feature>
<feature type="binding site" evidence="2">
    <location>
        <position position="314"/>
    </location>
    <ligand>
        <name>ergosterol</name>
        <dbReference type="ChEBI" id="CHEBI:16933"/>
    </ligand>
</feature>
<feature type="binding site" evidence="2">
    <location>
        <begin position="493"/>
        <end position="496"/>
    </location>
    <ligand>
        <name>a 1,2-diacyl-sn-glycero-3-phospho-(1D-myo-inositol 4-phosphate)</name>
        <dbReference type="ChEBI" id="CHEBI:58178"/>
    </ligand>
</feature>
<feature type="binding site" evidence="2">
    <location>
        <begin position="522"/>
        <end position="523"/>
    </location>
    <ligand>
        <name>a 1,2-diacyl-sn-glycero-3-phospho-(1D-myo-inositol 4-phosphate)</name>
        <dbReference type="ChEBI" id="CHEBI:58178"/>
    </ligand>
</feature>
<feature type="modified residue" description="N-acetylalanine" evidence="26">
    <location>
        <position position="2"/>
    </location>
</feature>
<feature type="modified residue" description="Phosphoserine" evidence="17 18 19 20 21 22 24 25">
    <location>
        <position position="190"/>
    </location>
</feature>
<feature type="modified residue" description="Phosphoserine" evidence="17 18 19 20 21 22 23 24 25">
    <location>
        <position position="193"/>
    </location>
</feature>
<feature type="modified residue" description="Phosphoserine" evidence="20">
    <location>
        <position position="198"/>
    </location>
</feature>
<feature type="modified residue" description="Phosphoserine" evidence="24">
    <location>
        <position position="238"/>
    </location>
</feature>
<feature type="modified residue" description="Phosphoserine" evidence="24">
    <location>
        <position position="240"/>
    </location>
</feature>
<feature type="modified residue" description="Phosphoserine" evidence="24">
    <location>
        <position position="338"/>
    </location>
</feature>
<feature type="modified residue" description="Phosphoserine" evidence="3">
    <location>
        <position position="345"/>
    </location>
</feature>
<feature type="modified residue" description="Phosphoserine" evidence="17 18 19 20 21 22 23 24 25">
    <location>
        <position position="351"/>
    </location>
</feature>
<feature type="modified residue" description="Phosphothreonine" evidence="24 25">
    <location>
        <position position="377"/>
    </location>
</feature>
<feature type="modified residue" description="Phosphoserine" evidence="24">
    <location>
        <position position="379"/>
    </location>
</feature>
<feature type="modified residue" description="Phosphoserine" evidence="17 18 20 21 24 25">
    <location>
        <position position="382"/>
    </location>
</feature>
<feature type="modified residue" description="Phosphoserine" evidence="24 25">
    <location>
        <position position="385"/>
    </location>
</feature>
<feature type="modified residue" description="Phosphoserine" evidence="24 25">
    <location>
        <position position="386"/>
    </location>
</feature>
<feature type="modified residue" description="Phosphoserine" evidence="18 24">
    <location>
        <position position="389"/>
    </location>
</feature>
<feature type="sequence variant" id="VAR_036099" description="In a colorectal cancer sample; somatic mutation." evidence="9">
    <original>D</original>
    <variation>A</variation>
    <location>
        <position position="278"/>
    </location>
</feature>
<feature type="mutagenesis site" description="Impaired lipid exchange activity. Induces a shift in subcellular location to the endoplasmic reticulum." evidence="13">
    <original>R</original>
    <variation>L</variation>
    <location>
        <position position="108"/>
    </location>
</feature>
<feature type="mutagenesis site" description="Impaired lipid exchange activity. Abolishes interaction with VAPA." evidence="13">
    <original>FF</original>
    <variation>AA</variation>
    <location>
        <begin position="359"/>
        <end position="360"/>
    </location>
</feature>
<feature type="strand" evidence="27">
    <location>
        <begin position="377"/>
        <end position="379"/>
    </location>
</feature>
<feature type="helix" evidence="28">
    <location>
        <begin position="419"/>
        <end position="423"/>
    </location>
</feature>
<feature type="helix" evidence="28">
    <location>
        <begin position="431"/>
        <end position="433"/>
    </location>
</feature>
<feature type="helix" evidence="28">
    <location>
        <begin position="438"/>
        <end position="440"/>
    </location>
</feature>
<feature type="strand" evidence="28">
    <location>
        <begin position="441"/>
        <end position="445"/>
    </location>
</feature>
<feature type="helix" evidence="28">
    <location>
        <begin position="446"/>
        <end position="451"/>
    </location>
</feature>
<feature type="helix" evidence="28">
    <location>
        <begin position="452"/>
        <end position="456"/>
    </location>
</feature>
<feature type="helix" evidence="28">
    <location>
        <begin position="458"/>
        <end position="463"/>
    </location>
</feature>
<feature type="helix" evidence="28">
    <location>
        <begin position="469"/>
        <end position="482"/>
    </location>
</feature>
<feature type="helix" evidence="28">
    <location>
        <begin position="483"/>
        <end position="485"/>
    </location>
</feature>
<feature type="turn" evidence="28">
    <location>
        <begin position="487"/>
        <end position="489"/>
    </location>
</feature>
<feature type="strand" evidence="28">
    <location>
        <begin position="493"/>
        <end position="495"/>
    </location>
</feature>
<feature type="strand" evidence="28">
    <location>
        <begin position="502"/>
        <end position="507"/>
    </location>
</feature>
<feature type="turn" evidence="28">
    <location>
        <begin position="508"/>
        <end position="511"/>
    </location>
</feature>
<feature type="strand" evidence="28">
    <location>
        <begin position="512"/>
        <end position="521"/>
    </location>
</feature>
<feature type="turn" evidence="28">
    <location>
        <begin position="522"/>
        <end position="525"/>
    </location>
</feature>
<feature type="strand" evidence="28">
    <location>
        <begin position="526"/>
        <end position="533"/>
    </location>
</feature>
<feature type="strand" evidence="28">
    <location>
        <begin position="536"/>
        <end position="549"/>
    </location>
</feature>
<feature type="strand" evidence="28">
    <location>
        <begin position="551"/>
        <end position="566"/>
    </location>
</feature>
<feature type="turn" evidence="28">
    <location>
        <begin position="567"/>
        <end position="569"/>
    </location>
</feature>
<feature type="strand" evidence="28">
    <location>
        <begin position="572"/>
        <end position="576"/>
    </location>
</feature>
<feature type="strand" evidence="28">
    <location>
        <begin position="579"/>
        <end position="583"/>
    </location>
</feature>
<feature type="turn" evidence="28">
    <location>
        <begin position="585"/>
        <end position="587"/>
    </location>
</feature>
<feature type="strand" evidence="28">
    <location>
        <begin position="591"/>
        <end position="602"/>
    </location>
</feature>
<feature type="turn" evidence="28">
    <location>
        <begin position="603"/>
        <end position="605"/>
    </location>
</feature>
<feature type="strand" evidence="28">
    <location>
        <begin position="608"/>
        <end position="613"/>
    </location>
</feature>
<feature type="strand" evidence="28">
    <location>
        <begin position="617"/>
        <end position="619"/>
    </location>
</feature>
<feature type="strand" evidence="28">
    <location>
        <begin position="626"/>
        <end position="632"/>
    </location>
</feature>
<feature type="strand" evidence="28">
    <location>
        <begin position="638"/>
        <end position="645"/>
    </location>
</feature>
<feature type="strand" evidence="28">
    <location>
        <begin position="648"/>
        <end position="654"/>
    </location>
</feature>
<feature type="strand" evidence="28">
    <location>
        <begin position="676"/>
        <end position="682"/>
    </location>
</feature>
<feature type="helix" evidence="28">
    <location>
        <begin position="690"/>
        <end position="692"/>
    </location>
</feature>
<feature type="turn" evidence="28">
    <location>
        <begin position="693"/>
        <end position="695"/>
    </location>
</feature>
<feature type="helix" evidence="28">
    <location>
        <begin position="698"/>
        <end position="701"/>
    </location>
</feature>
<feature type="helix" evidence="28">
    <location>
        <begin position="702"/>
        <end position="704"/>
    </location>
</feature>
<feature type="helix" evidence="28">
    <location>
        <begin position="715"/>
        <end position="717"/>
    </location>
</feature>
<feature type="helix" evidence="28">
    <location>
        <begin position="719"/>
        <end position="725"/>
    </location>
</feature>
<feature type="helix" evidence="28">
    <location>
        <begin position="729"/>
        <end position="760"/>
    </location>
</feature>
<feature type="strand" evidence="28">
    <location>
        <begin position="770"/>
        <end position="776"/>
    </location>
</feature>
<feature type="turn" evidence="28">
    <location>
        <begin position="778"/>
        <end position="780"/>
    </location>
</feature>
<feature type="strand" evidence="28">
    <location>
        <begin position="782"/>
        <end position="787"/>
    </location>
</feature>
<feature type="helix" evidence="28">
    <location>
        <begin position="791"/>
        <end position="797"/>
    </location>
</feature>
<name>OSBP1_HUMAN</name>
<evidence type="ECO:0000250" key="1">
    <source>
        <dbReference type="UniProtKB" id="P16258"/>
    </source>
</evidence>
<evidence type="ECO:0000250" key="2">
    <source>
        <dbReference type="UniProtKB" id="P35844"/>
    </source>
</evidence>
<evidence type="ECO:0000250" key="3">
    <source>
        <dbReference type="UniProtKB" id="Q3B7Z2"/>
    </source>
</evidence>
<evidence type="ECO:0000255" key="4"/>
<evidence type="ECO:0000255" key="5">
    <source>
        <dbReference type="PROSITE-ProRule" id="PRU00145"/>
    </source>
</evidence>
<evidence type="ECO:0000256" key="6">
    <source>
        <dbReference type="SAM" id="MobiDB-lite"/>
    </source>
</evidence>
<evidence type="ECO:0000269" key="7">
    <source>
    </source>
</evidence>
<evidence type="ECO:0000269" key="8">
    <source>
    </source>
</evidence>
<evidence type="ECO:0000269" key="9">
    <source>
    </source>
</evidence>
<evidence type="ECO:0000269" key="10">
    <source>
    </source>
</evidence>
<evidence type="ECO:0000269" key="11">
    <source>
    </source>
</evidence>
<evidence type="ECO:0000269" key="12">
    <source>
    </source>
</evidence>
<evidence type="ECO:0000269" key="13">
    <source>
    </source>
</evidence>
<evidence type="ECO:0000269" key="14">
    <source>
    </source>
</evidence>
<evidence type="ECO:0000305" key="15"/>
<evidence type="ECO:0000312" key="16">
    <source>
        <dbReference type="HGNC" id="HGNC:8503"/>
    </source>
</evidence>
<evidence type="ECO:0007744" key="17">
    <source>
    </source>
</evidence>
<evidence type="ECO:0007744" key="18">
    <source>
    </source>
</evidence>
<evidence type="ECO:0007744" key="19">
    <source>
    </source>
</evidence>
<evidence type="ECO:0007744" key="20">
    <source>
    </source>
</evidence>
<evidence type="ECO:0007744" key="21">
    <source>
    </source>
</evidence>
<evidence type="ECO:0007744" key="22">
    <source>
    </source>
</evidence>
<evidence type="ECO:0007744" key="23">
    <source>
    </source>
</evidence>
<evidence type="ECO:0007744" key="24">
    <source>
    </source>
</evidence>
<evidence type="ECO:0007744" key="25">
    <source>
    </source>
</evidence>
<evidence type="ECO:0007744" key="26">
    <source>
    </source>
</evidence>
<evidence type="ECO:0007829" key="27">
    <source>
        <dbReference type="PDB" id="2RR3"/>
    </source>
</evidence>
<evidence type="ECO:0007829" key="28">
    <source>
        <dbReference type="PDB" id="7V62"/>
    </source>
</evidence>
<dbReference type="EMBL" id="M86917">
    <property type="protein sequence ID" value="AAA59973.1"/>
    <property type="molecule type" value="mRNA"/>
</dbReference>
<dbReference type="EMBL" id="AF185696">
    <property type="protein sequence ID" value="AAG17011.1"/>
    <property type="molecule type" value="mRNA"/>
</dbReference>
<dbReference type="EMBL" id="AF185705">
    <property type="protein sequence ID" value="AAG28373.1"/>
    <property type="molecule type" value="Genomic_DNA"/>
</dbReference>
<dbReference type="EMBL" id="AF185697">
    <property type="protein sequence ID" value="AAG28373.1"/>
    <property type="status" value="JOINED"/>
    <property type="molecule type" value="Genomic_DNA"/>
</dbReference>
<dbReference type="EMBL" id="AF185698">
    <property type="protein sequence ID" value="AAG28373.1"/>
    <property type="status" value="JOINED"/>
    <property type="molecule type" value="Genomic_DNA"/>
</dbReference>
<dbReference type="EMBL" id="AF185699">
    <property type="protein sequence ID" value="AAG28373.1"/>
    <property type="status" value="JOINED"/>
    <property type="molecule type" value="Genomic_DNA"/>
</dbReference>
<dbReference type="EMBL" id="AF185700">
    <property type="protein sequence ID" value="AAG28373.1"/>
    <property type="status" value="JOINED"/>
    <property type="molecule type" value="Genomic_DNA"/>
</dbReference>
<dbReference type="EMBL" id="AF185701">
    <property type="protein sequence ID" value="AAG28373.1"/>
    <property type="status" value="JOINED"/>
    <property type="molecule type" value="Genomic_DNA"/>
</dbReference>
<dbReference type="EMBL" id="AF185702">
    <property type="protein sequence ID" value="AAG28373.1"/>
    <property type="status" value="JOINED"/>
    <property type="molecule type" value="Genomic_DNA"/>
</dbReference>
<dbReference type="EMBL" id="AF185703">
    <property type="protein sequence ID" value="AAG28373.1"/>
    <property type="status" value="JOINED"/>
    <property type="molecule type" value="Genomic_DNA"/>
</dbReference>
<dbReference type="EMBL" id="AF185704">
    <property type="protein sequence ID" value="AAG28373.1"/>
    <property type="status" value="JOINED"/>
    <property type="molecule type" value="Genomic_DNA"/>
</dbReference>
<dbReference type="EMBL" id="BC011581">
    <property type="protein sequence ID" value="AAH11581.1"/>
    <property type="molecule type" value="mRNA"/>
</dbReference>
<dbReference type="EMBL" id="BC063121">
    <property type="protein sequence ID" value="AAH63121.1"/>
    <property type="status" value="ALT_SEQ"/>
    <property type="molecule type" value="mRNA"/>
</dbReference>
<dbReference type="CCDS" id="CCDS7974.1"/>
<dbReference type="PIR" id="A34581">
    <property type="entry name" value="A34581"/>
</dbReference>
<dbReference type="RefSeq" id="NP_002547.1">
    <property type="nucleotide sequence ID" value="NM_002556.3"/>
</dbReference>
<dbReference type="PDB" id="2RR3">
    <property type="method" value="NMR"/>
    <property type="chains" value="B=346-379"/>
</dbReference>
<dbReference type="PDB" id="7V62">
    <property type="method" value="X-ray"/>
    <property type="resolution" value="3.25 A"/>
    <property type="chains" value="A/B/C/D=406-807"/>
</dbReference>
<dbReference type="PDBsum" id="2RR3"/>
<dbReference type="PDBsum" id="7V62"/>
<dbReference type="BMRB" id="P22059"/>
<dbReference type="SMR" id="P22059"/>
<dbReference type="BioGRID" id="111048">
    <property type="interactions" value="151"/>
</dbReference>
<dbReference type="ComplexPortal" id="CPX-489">
    <property type="entry name" value="VAPA-OSBP complex"/>
</dbReference>
<dbReference type="CORUM" id="P22059"/>
<dbReference type="ELM" id="P22059"/>
<dbReference type="FunCoup" id="P22059">
    <property type="interactions" value="3511"/>
</dbReference>
<dbReference type="IntAct" id="P22059">
    <property type="interactions" value="60"/>
</dbReference>
<dbReference type="MINT" id="P22059"/>
<dbReference type="STRING" id="9606.ENSP00000263847"/>
<dbReference type="BindingDB" id="P22059"/>
<dbReference type="ChEMBL" id="CHEMBL4523203"/>
<dbReference type="SwissLipids" id="SLP:000000490"/>
<dbReference type="GlyGen" id="P22059">
    <property type="glycosylation" value="2 sites, 1 O-linked glycan (1 site)"/>
</dbReference>
<dbReference type="iPTMnet" id="P22059"/>
<dbReference type="MetOSite" id="P22059"/>
<dbReference type="PhosphoSitePlus" id="P22059"/>
<dbReference type="SwissPalm" id="P22059"/>
<dbReference type="BioMuta" id="OSBP"/>
<dbReference type="DMDM" id="129308"/>
<dbReference type="jPOST" id="P22059"/>
<dbReference type="MassIVE" id="P22059"/>
<dbReference type="PaxDb" id="9606-ENSP00000263847"/>
<dbReference type="PeptideAtlas" id="P22059"/>
<dbReference type="ProteomicsDB" id="53954"/>
<dbReference type="Pumba" id="P22059"/>
<dbReference type="Antibodypedia" id="27760">
    <property type="antibodies" value="273 antibodies from 31 providers"/>
</dbReference>
<dbReference type="DNASU" id="5007"/>
<dbReference type="Ensembl" id="ENST00000263847.6">
    <property type="protein sequence ID" value="ENSP00000263847.1"/>
    <property type="gene ID" value="ENSG00000110048.12"/>
</dbReference>
<dbReference type="GeneID" id="5007"/>
<dbReference type="KEGG" id="hsa:5007"/>
<dbReference type="MANE-Select" id="ENST00000263847.6">
    <property type="protein sequence ID" value="ENSP00000263847.1"/>
    <property type="RefSeq nucleotide sequence ID" value="NM_002556.3"/>
    <property type="RefSeq protein sequence ID" value="NP_002547.1"/>
</dbReference>
<dbReference type="UCSC" id="uc001noc.1">
    <property type="organism name" value="human"/>
</dbReference>
<dbReference type="AGR" id="HGNC:8503"/>
<dbReference type="CTD" id="5007"/>
<dbReference type="DisGeNET" id="5007"/>
<dbReference type="GeneCards" id="OSBP"/>
<dbReference type="HGNC" id="HGNC:8503">
    <property type="gene designation" value="OSBP"/>
</dbReference>
<dbReference type="HPA" id="ENSG00000110048">
    <property type="expression patterns" value="Low tissue specificity"/>
</dbReference>
<dbReference type="MIM" id="167040">
    <property type="type" value="gene"/>
</dbReference>
<dbReference type="neXtProt" id="NX_P22059"/>
<dbReference type="OpenTargets" id="ENSG00000110048"/>
<dbReference type="PharmGKB" id="PA32822"/>
<dbReference type="VEuPathDB" id="HostDB:ENSG00000110048"/>
<dbReference type="eggNOG" id="KOG1737">
    <property type="taxonomic scope" value="Eukaryota"/>
</dbReference>
<dbReference type="GeneTree" id="ENSGT00940000156164"/>
<dbReference type="HOGENOM" id="CLU_007105_5_0_1"/>
<dbReference type="InParanoid" id="P22059"/>
<dbReference type="OMA" id="WDEKMDY"/>
<dbReference type="OrthoDB" id="14833at2759"/>
<dbReference type="PAN-GO" id="P22059">
    <property type="GO annotations" value="6 GO annotations based on evolutionary models"/>
</dbReference>
<dbReference type="PhylomeDB" id="P22059"/>
<dbReference type="TreeFam" id="TF320922"/>
<dbReference type="PathwayCommons" id="P22059"/>
<dbReference type="Reactome" id="R-HSA-1660661">
    <property type="pathway name" value="Sphingolipid de novo biosynthesis"/>
</dbReference>
<dbReference type="Reactome" id="R-HSA-192105">
    <property type="pathway name" value="Synthesis of bile acids and bile salts"/>
</dbReference>
<dbReference type="SignaLink" id="P22059"/>
<dbReference type="SIGNOR" id="P22059"/>
<dbReference type="BioGRID-ORCS" id="5007">
    <property type="hits" value="368 hits in 1159 CRISPR screens"/>
</dbReference>
<dbReference type="ChiTaRS" id="OSBP">
    <property type="organism name" value="human"/>
</dbReference>
<dbReference type="EvolutionaryTrace" id="P22059"/>
<dbReference type="GeneWiki" id="OSBP"/>
<dbReference type="GenomeRNAi" id="5007"/>
<dbReference type="Pharos" id="P22059">
    <property type="development level" value="Tbio"/>
</dbReference>
<dbReference type="PRO" id="PR:P22059"/>
<dbReference type="Proteomes" id="UP000005640">
    <property type="component" value="Chromosome 11"/>
</dbReference>
<dbReference type="RNAct" id="P22059">
    <property type="molecule type" value="protein"/>
</dbReference>
<dbReference type="Bgee" id="ENSG00000110048">
    <property type="expression patterns" value="Expressed in type B pancreatic cell and 215 other cell types or tissues"/>
</dbReference>
<dbReference type="ExpressionAtlas" id="P22059">
    <property type="expression patterns" value="baseline and differential"/>
</dbReference>
<dbReference type="GO" id="GO:0030054">
    <property type="term" value="C:cell junction"/>
    <property type="evidence" value="ECO:0000314"/>
    <property type="project" value="HPA"/>
</dbReference>
<dbReference type="GO" id="GO:0005737">
    <property type="term" value="C:cytoplasm"/>
    <property type="evidence" value="ECO:0000314"/>
    <property type="project" value="AgBase"/>
</dbReference>
<dbReference type="GO" id="GO:0005829">
    <property type="term" value="C:cytosol"/>
    <property type="evidence" value="ECO:0000314"/>
    <property type="project" value="UniProtKB"/>
</dbReference>
<dbReference type="GO" id="GO:0005789">
    <property type="term" value="C:endoplasmic reticulum membrane"/>
    <property type="evidence" value="ECO:0000314"/>
    <property type="project" value="ComplexPortal"/>
</dbReference>
<dbReference type="GO" id="GO:0005794">
    <property type="term" value="C:Golgi apparatus"/>
    <property type="evidence" value="ECO:0000314"/>
    <property type="project" value="HPA"/>
</dbReference>
<dbReference type="GO" id="GO:0000139">
    <property type="term" value="C:Golgi membrane"/>
    <property type="evidence" value="ECO:0000314"/>
    <property type="project" value="UniProtKB"/>
</dbReference>
<dbReference type="GO" id="GO:0016020">
    <property type="term" value="C:membrane"/>
    <property type="evidence" value="ECO:0000314"/>
    <property type="project" value="AgBase"/>
</dbReference>
<dbReference type="GO" id="GO:0005730">
    <property type="term" value="C:nucleolus"/>
    <property type="evidence" value="ECO:0000314"/>
    <property type="project" value="HPA"/>
</dbReference>
<dbReference type="GO" id="GO:0005654">
    <property type="term" value="C:nucleoplasm"/>
    <property type="evidence" value="ECO:0000314"/>
    <property type="project" value="HPA"/>
</dbReference>
<dbReference type="GO" id="GO:0097038">
    <property type="term" value="C:perinuclear endoplasmic reticulum"/>
    <property type="evidence" value="ECO:0000318"/>
    <property type="project" value="GO_Central"/>
</dbReference>
<dbReference type="GO" id="GO:0048471">
    <property type="term" value="C:perinuclear region of cytoplasm"/>
    <property type="evidence" value="ECO:0000314"/>
    <property type="project" value="UniProtKB"/>
</dbReference>
<dbReference type="GO" id="GO:0005886">
    <property type="term" value="C:plasma membrane"/>
    <property type="evidence" value="ECO:0000318"/>
    <property type="project" value="GO_Central"/>
</dbReference>
<dbReference type="GO" id="GO:0005802">
    <property type="term" value="C:trans-Golgi network"/>
    <property type="evidence" value="ECO:0000314"/>
    <property type="project" value="UniProtKB"/>
</dbReference>
<dbReference type="GO" id="GO:0008142">
    <property type="term" value="F:oxysterol binding"/>
    <property type="evidence" value="ECO:0000304"/>
    <property type="project" value="ProtInc"/>
</dbReference>
<dbReference type="GO" id="GO:0070273">
    <property type="term" value="F:phosphatidylinositol-4-phosphate binding"/>
    <property type="evidence" value="ECO:0000314"/>
    <property type="project" value="UniProtKB"/>
</dbReference>
<dbReference type="GO" id="GO:0019904">
    <property type="term" value="F:protein domain specific binding"/>
    <property type="evidence" value="ECO:0000353"/>
    <property type="project" value="UniProtKB"/>
</dbReference>
<dbReference type="GO" id="GO:0032934">
    <property type="term" value="F:sterol binding"/>
    <property type="evidence" value="ECO:0000318"/>
    <property type="project" value="GO_Central"/>
</dbReference>
<dbReference type="GO" id="GO:0120015">
    <property type="term" value="F:sterol transfer activity"/>
    <property type="evidence" value="ECO:0000314"/>
    <property type="project" value="GO_Central"/>
</dbReference>
<dbReference type="GO" id="GO:0006699">
    <property type="term" value="P:bile acid biosynthetic process"/>
    <property type="evidence" value="ECO:0000304"/>
    <property type="project" value="Reactome"/>
</dbReference>
<dbReference type="GO" id="GO:0035627">
    <property type="term" value="P:ceramide transport"/>
    <property type="evidence" value="ECO:0000315"/>
    <property type="project" value="ComplexPortal"/>
</dbReference>
<dbReference type="GO" id="GO:0032367">
    <property type="term" value="P:intracellular cholesterol transport"/>
    <property type="evidence" value="ECO:0000315"/>
    <property type="project" value="UniProtKB"/>
</dbReference>
<dbReference type="GO" id="GO:0015914">
    <property type="term" value="P:phospholipid transport"/>
    <property type="evidence" value="ECO:0000314"/>
    <property type="project" value="ComplexPortal"/>
</dbReference>
<dbReference type="GO" id="GO:0035774">
    <property type="term" value="P:positive regulation of insulin secretion involved in cellular response to glucose stimulus"/>
    <property type="evidence" value="ECO:0007669"/>
    <property type="project" value="Ensembl"/>
</dbReference>
<dbReference type="GO" id="GO:1904411">
    <property type="term" value="P:positive regulation of secretory granule organization"/>
    <property type="evidence" value="ECO:0007669"/>
    <property type="project" value="Ensembl"/>
</dbReference>
<dbReference type="GO" id="GO:0006686">
    <property type="term" value="P:sphingomyelin biosynthetic process"/>
    <property type="evidence" value="ECO:0000315"/>
    <property type="project" value="ComplexPortal"/>
</dbReference>
<dbReference type="GO" id="GO:0015918">
    <property type="term" value="P:sterol transport"/>
    <property type="evidence" value="ECO:0000314"/>
    <property type="project" value="UniProtKB"/>
</dbReference>
<dbReference type="CDD" id="cd13284">
    <property type="entry name" value="PH_OSBP_ORP4"/>
    <property type="match status" value="1"/>
</dbReference>
<dbReference type="DisProt" id="DP01491"/>
<dbReference type="FunFam" id="2.30.29.30:FF:000074">
    <property type="entry name" value="Oxysterol-binding protein"/>
    <property type="match status" value="1"/>
</dbReference>
<dbReference type="FunFam" id="2.40.160.120:FF:000003">
    <property type="entry name" value="Oxysterol-binding protein"/>
    <property type="match status" value="1"/>
</dbReference>
<dbReference type="Gene3D" id="2.40.160.120">
    <property type="match status" value="1"/>
</dbReference>
<dbReference type="Gene3D" id="2.30.29.30">
    <property type="entry name" value="Pleckstrin-homology domain (PH domain)/Phosphotyrosine-binding domain (PTB)"/>
    <property type="match status" value="1"/>
</dbReference>
<dbReference type="InterPro" id="IPR037239">
    <property type="entry name" value="OSBP_sf"/>
</dbReference>
<dbReference type="InterPro" id="IPR000648">
    <property type="entry name" value="Oxysterol-bd"/>
</dbReference>
<dbReference type="InterPro" id="IPR018494">
    <property type="entry name" value="Oxysterol-bd_CS"/>
</dbReference>
<dbReference type="InterPro" id="IPR011993">
    <property type="entry name" value="PH-like_dom_sf"/>
</dbReference>
<dbReference type="InterPro" id="IPR001849">
    <property type="entry name" value="PH_domain"/>
</dbReference>
<dbReference type="PANTHER" id="PTHR10972:SF205">
    <property type="entry name" value="OXYSTEROL-BINDING PROTEIN 1"/>
    <property type="match status" value="1"/>
</dbReference>
<dbReference type="PANTHER" id="PTHR10972">
    <property type="entry name" value="OXYSTEROL-BINDING PROTEIN-RELATED"/>
    <property type="match status" value="1"/>
</dbReference>
<dbReference type="Pfam" id="PF01237">
    <property type="entry name" value="Oxysterol_BP"/>
    <property type="match status" value="1"/>
</dbReference>
<dbReference type="Pfam" id="PF00169">
    <property type="entry name" value="PH"/>
    <property type="match status" value="1"/>
</dbReference>
<dbReference type="SMART" id="SM00233">
    <property type="entry name" value="PH"/>
    <property type="match status" value="1"/>
</dbReference>
<dbReference type="SUPFAM" id="SSF144000">
    <property type="entry name" value="Oxysterol-binding protein-like"/>
    <property type="match status" value="1"/>
</dbReference>
<dbReference type="SUPFAM" id="SSF50729">
    <property type="entry name" value="PH domain-like"/>
    <property type="match status" value="1"/>
</dbReference>
<dbReference type="PROSITE" id="PS01013">
    <property type="entry name" value="OSBP"/>
    <property type="match status" value="1"/>
</dbReference>
<dbReference type="PROSITE" id="PS50003">
    <property type="entry name" value="PH_DOMAIN"/>
    <property type="match status" value="1"/>
</dbReference>